<comment type="function">
    <text evidence="1">Involved in the degradation of the pyridine ring of trigonelline (TG; N-methylnicotinate) into succinate and methylamine as carbon and nitrogen sources, respectively. Catalyzes the insertion of two oxygens, followed by a ring cleavage of trigonelline to yield (Z)-2-((N-methylformamido)methylene)-5-hydroxybutyrolactone (MFMB). It is able to use reduced FMN or FAD.</text>
</comment>
<comment type="catalytic activity">
    <reaction evidence="1">
        <text>N-methylnicotinate + FMNH2 + O2 = (Z)-2-((N-methylformamido)methylene)-5-hydroxybutanolactone + FMN + H(+)</text>
        <dbReference type="Rhea" id="RHEA:17109"/>
        <dbReference type="ChEBI" id="CHEBI:15378"/>
        <dbReference type="ChEBI" id="CHEBI:15379"/>
        <dbReference type="ChEBI" id="CHEBI:18123"/>
        <dbReference type="ChEBI" id="CHEBI:57618"/>
        <dbReference type="ChEBI" id="CHEBI:58210"/>
        <dbReference type="ChEBI" id="CHEBI:141413"/>
    </reaction>
    <physiologicalReaction direction="left-to-right" evidence="4">
        <dbReference type="Rhea" id="RHEA:17110"/>
    </physiologicalReaction>
</comment>
<comment type="catalytic activity">
    <reaction evidence="1">
        <text>N-methylnicotinate + FADH2 + O2 = (Z)-2-((N-methylformamido)methylene)-5-hydroxybutanolactone + FAD + H(+)</text>
        <dbReference type="Rhea" id="RHEA:57028"/>
        <dbReference type="ChEBI" id="CHEBI:15378"/>
        <dbReference type="ChEBI" id="CHEBI:15379"/>
        <dbReference type="ChEBI" id="CHEBI:18123"/>
        <dbReference type="ChEBI" id="CHEBI:57692"/>
        <dbReference type="ChEBI" id="CHEBI:58307"/>
        <dbReference type="ChEBI" id="CHEBI:141413"/>
    </reaction>
    <physiologicalReaction direction="left-to-right" evidence="4">
        <dbReference type="Rhea" id="RHEA:57029"/>
    </physiologicalReaction>
</comment>
<comment type="subunit">
    <text evidence="1">Homodimer. The trigonelline monooxygenase is composed of a reductase component TgnA and an oxygenase component TgnB.</text>
</comment>
<comment type="similarity">
    <text evidence="3">Belongs to the bacterial luciferase oxidoreductase family.</text>
</comment>
<gene>
    <name evidence="2" type="primary">tgnB</name>
    <name evidence="5" type="ordered locus">ACIAD2543</name>
</gene>
<reference key="1">
    <citation type="journal article" date="2004" name="Nucleic Acids Res.">
        <title>Unique features revealed by the genome sequence of Acinetobacter sp. ADP1, a versatile and naturally transformation competent bacterium.</title>
        <authorList>
            <person name="Barbe V."/>
            <person name="Vallenet D."/>
            <person name="Fonknechten N."/>
            <person name="Kreimeyer A."/>
            <person name="Oztas S."/>
            <person name="Labarre L."/>
            <person name="Cruveiller S."/>
            <person name="Robert C."/>
            <person name="Duprat S."/>
            <person name="Wincker P."/>
            <person name="Ornston L.N."/>
            <person name="Weissenbach J."/>
            <person name="Marliere P."/>
            <person name="Cohen G.N."/>
            <person name="Medigue C."/>
        </authorList>
    </citation>
    <scope>NUCLEOTIDE SEQUENCE [LARGE SCALE GENOMIC DNA]</scope>
    <source>
        <strain evidence="6">ATCC 33305 / BD413 / ADP1</strain>
    </source>
</reference>
<reference key="2">
    <citation type="journal article" date="2018" name="Proc. Natl. Acad. Sci. U.S.A.">
        <title>Elucidation of the trigonelline degradation pathway reveals previously undescribed enzymes and metabolites.</title>
        <authorList>
            <person name="Perchat N."/>
            <person name="Saaidi P.L."/>
            <person name="Darii E."/>
            <person name="Pelle C."/>
            <person name="Petit J.L."/>
            <person name="Besnard-Gonnet M."/>
            <person name="de Berardinis V."/>
            <person name="Dupont M."/>
            <person name="Gimbernat A."/>
            <person name="Salanoubat M."/>
            <person name="Fischer C."/>
            <person name="Perret A."/>
        </authorList>
    </citation>
    <scope>FUNCTION</scope>
    <scope>CATALYTIC ACTIVITY</scope>
    <scope>SUBUNIT</scope>
    <source>
        <strain>ATCC 33305 / BD413 / ADP1</strain>
    </source>
</reference>
<evidence type="ECO:0000269" key="1">
    <source>
    </source>
</evidence>
<evidence type="ECO:0000303" key="2">
    <source>
    </source>
</evidence>
<evidence type="ECO:0000305" key="3"/>
<evidence type="ECO:0000305" key="4">
    <source>
    </source>
</evidence>
<evidence type="ECO:0000312" key="5">
    <source>
        <dbReference type="EMBL" id="CAG69308.1"/>
    </source>
</evidence>
<evidence type="ECO:0000312" key="6">
    <source>
        <dbReference type="Proteomes" id="UP000000430"/>
    </source>
</evidence>
<name>TGNB_ACIAD</name>
<sequence length="360" mass="41152">MRFSLFVHMERVSDQQTQKQLYDEMIELCQIADRGGMHAIWTGEHHAMNFTIAPNPFLNIADLANKTKHVRLGTGTVVAPFWHPIKLAGEAAMTDIISNGRLDIGIARGAYSFEYERMVPGMDAWSAGQRLREMIPAIKNLWKGDYEHNGEFWQFPKTTSAPQPLQQPNPPIWVAARDPNSHEFAVQNGCNVQVTPLHLGDEEVEKLMGHFNSACEKFQDIERPEIMLLRHTYVADSEEDAQVAANEMNVFYNYFGAWFKNEREINQGLIAPLSDEEIAAHPFYTPEAMRKNNVIGQAQEVIDRLKAYEAMGYDEYSFWIDTGMSFERKKASLERMINEVMPAFSESKVDRRHATISAVY</sequence>
<organism>
    <name type="scientific">Acinetobacter baylyi (strain ATCC 33305 / BD413 / ADP1)</name>
    <dbReference type="NCBI Taxonomy" id="62977"/>
    <lineage>
        <taxon>Bacteria</taxon>
        <taxon>Pseudomonadati</taxon>
        <taxon>Pseudomonadota</taxon>
        <taxon>Gammaproteobacteria</taxon>
        <taxon>Moraxellales</taxon>
        <taxon>Moraxellaceae</taxon>
        <taxon>Acinetobacter</taxon>
    </lineage>
</organism>
<dbReference type="EC" id="1.14.14.-" evidence="1"/>
<dbReference type="EMBL" id="CR543861">
    <property type="protein sequence ID" value="CAG69308.1"/>
    <property type="molecule type" value="Genomic_DNA"/>
</dbReference>
<dbReference type="RefSeq" id="WP_004928624.1">
    <property type="nucleotide sequence ID" value="NC_005966.1"/>
</dbReference>
<dbReference type="SMR" id="Q6F9F6"/>
<dbReference type="STRING" id="202950.GCA_001485005_01474"/>
<dbReference type="GeneID" id="45234827"/>
<dbReference type="KEGG" id="aci:ACIAD2543"/>
<dbReference type="eggNOG" id="COG2141">
    <property type="taxonomic scope" value="Bacteria"/>
</dbReference>
<dbReference type="HOGENOM" id="CLU_027853_3_0_6"/>
<dbReference type="OrthoDB" id="7903015at2"/>
<dbReference type="BioCyc" id="ASP62977:ACIAD_RS11550-MONOMER"/>
<dbReference type="Proteomes" id="UP000000430">
    <property type="component" value="Chromosome"/>
</dbReference>
<dbReference type="GO" id="GO:0005829">
    <property type="term" value="C:cytosol"/>
    <property type="evidence" value="ECO:0007669"/>
    <property type="project" value="TreeGrafter"/>
</dbReference>
<dbReference type="GO" id="GO:0016712">
    <property type="term" value="F:oxidoreductase activity, acting on paired donors, with incorporation or reduction of molecular oxygen, reduced flavin or flavoprotein as one donor, and incorporation of one atom of oxygen"/>
    <property type="evidence" value="ECO:0000314"/>
    <property type="project" value="UniProtKB"/>
</dbReference>
<dbReference type="Gene3D" id="3.20.20.30">
    <property type="entry name" value="Luciferase-like domain"/>
    <property type="match status" value="1"/>
</dbReference>
<dbReference type="InterPro" id="IPR050766">
    <property type="entry name" value="Bact_Lucif_Oxidored"/>
</dbReference>
<dbReference type="InterPro" id="IPR011251">
    <property type="entry name" value="Luciferase-like_dom"/>
</dbReference>
<dbReference type="InterPro" id="IPR036661">
    <property type="entry name" value="Luciferase-like_sf"/>
</dbReference>
<dbReference type="PANTHER" id="PTHR30137:SF8">
    <property type="entry name" value="BLR5498 PROTEIN"/>
    <property type="match status" value="1"/>
</dbReference>
<dbReference type="PANTHER" id="PTHR30137">
    <property type="entry name" value="LUCIFERASE-LIKE MONOOXYGENASE"/>
    <property type="match status" value="1"/>
</dbReference>
<dbReference type="Pfam" id="PF00296">
    <property type="entry name" value="Bac_luciferase"/>
    <property type="match status" value="1"/>
</dbReference>
<dbReference type="SUPFAM" id="SSF51679">
    <property type="entry name" value="Bacterial luciferase-like"/>
    <property type="match status" value="1"/>
</dbReference>
<feature type="chain" id="PRO_0000445260" description="Flavin-dependent trigonelline monooxygenase, oxygenase component">
    <location>
        <begin position="1"/>
        <end position="360"/>
    </location>
</feature>
<protein>
    <recommendedName>
        <fullName evidence="2">Flavin-dependent trigonelline monooxygenase, oxygenase component</fullName>
        <ecNumber evidence="1">1.14.14.-</ecNumber>
    </recommendedName>
</protein>
<proteinExistence type="evidence at protein level"/>
<keyword id="KW-0274">FAD</keyword>
<keyword id="KW-0285">Flavoprotein</keyword>
<keyword id="KW-0288">FMN</keyword>
<keyword id="KW-0503">Monooxygenase</keyword>
<keyword id="KW-0560">Oxidoreductase</keyword>
<accession>Q6F9F6</accession>